<proteinExistence type="inferred from homology"/>
<evidence type="ECO:0000255" key="1">
    <source>
        <dbReference type="HAMAP-Rule" id="MF_00046"/>
    </source>
</evidence>
<gene>
    <name evidence="1" type="primary">murC</name>
    <name type="ordered locus">XfasM23_1968</name>
</gene>
<reference key="1">
    <citation type="journal article" date="2010" name="J. Bacteriol.">
        <title>Whole genome sequences of two Xylella fastidiosa strains (M12 and M23) causing almond leaf scorch disease in California.</title>
        <authorList>
            <person name="Chen J."/>
            <person name="Xie G."/>
            <person name="Han S."/>
            <person name="Chertkov O."/>
            <person name="Sims D."/>
            <person name="Civerolo E.L."/>
        </authorList>
    </citation>
    <scope>NUCLEOTIDE SEQUENCE [LARGE SCALE GENOMIC DNA]</scope>
    <source>
        <strain>M23</strain>
    </source>
</reference>
<accession>B2I9B2</accession>
<keyword id="KW-0067">ATP-binding</keyword>
<keyword id="KW-0131">Cell cycle</keyword>
<keyword id="KW-0132">Cell division</keyword>
<keyword id="KW-0133">Cell shape</keyword>
<keyword id="KW-0961">Cell wall biogenesis/degradation</keyword>
<keyword id="KW-0963">Cytoplasm</keyword>
<keyword id="KW-0436">Ligase</keyword>
<keyword id="KW-0547">Nucleotide-binding</keyword>
<keyword id="KW-0573">Peptidoglycan synthesis</keyword>
<name>MURC_XYLF2</name>
<comment type="function">
    <text evidence="1">Cell wall formation.</text>
</comment>
<comment type="catalytic activity">
    <reaction evidence="1">
        <text>UDP-N-acetyl-alpha-D-muramate + L-alanine + ATP = UDP-N-acetyl-alpha-D-muramoyl-L-alanine + ADP + phosphate + H(+)</text>
        <dbReference type="Rhea" id="RHEA:23372"/>
        <dbReference type="ChEBI" id="CHEBI:15378"/>
        <dbReference type="ChEBI" id="CHEBI:30616"/>
        <dbReference type="ChEBI" id="CHEBI:43474"/>
        <dbReference type="ChEBI" id="CHEBI:57972"/>
        <dbReference type="ChEBI" id="CHEBI:70757"/>
        <dbReference type="ChEBI" id="CHEBI:83898"/>
        <dbReference type="ChEBI" id="CHEBI:456216"/>
        <dbReference type="EC" id="6.3.2.8"/>
    </reaction>
</comment>
<comment type="pathway">
    <text evidence="1">Cell wall biogenesis; peptidoglycan biosynthesis.</text>
</comment>
<comment type="subcellular location">
    <subcellularLocation>
        <location evidence="1">Cytoplasm</location>
    </subcellularLocation>
</comment>
<comment type="similarity">
    <text evidence="1">Belongs to the MurCDEF family.</text>
</comment>
<sequence length="477" mass="50735">MIRRLQDNGDLIRAFPRVHFVGIGGAGMTGIAEVMLTLGYEVSGSDNADNAATRRLATLGARVMRGHSAANVLGTDCVVVSSAIREDNPELMEARSQRIPIMPRAAMLAELMRFRHGIAVAGTHGKTTTTSLIAAVLSEGGLDPTFVIGGQLLAAGANAKLGAGQWLVVEADESDGSFLRLNPLVAVVTNIDADHLENYGNDFSRIKDAFTEFLQRLPFYGLALLCLDDPEVAELVGKARRHVMTYGIDAAADVRAEDVVQDGARMCFTLCLPEGKVIPVTLALPGRHNVLNALAASAVGWQLGVPPEVIGRALKSFVGIGRRFNDLGDVAIGNGACVRLIDDYGHHPRELEAVFAAARGGWPDKRLVVAFQPHRYSRTRDQFDAFAAVLSSVDALVLSEVYPAGEVPIPGADAKALARAIRARGRSEPVVVGQVASLIDVLPDVLQEGDLLLMMGAGDIGSIAQRIVHDGFVFGEV</sequence>
<dbReference type="EC" id="6.3.2.8" evidence="1"/>
<dbReference type="EMBL" id="CP001011">
    <property type="protein sequence ID" value="ACB93367.1"/>
    <property type="molecule type" value="Genomic_DNA"/>
</dbReference>
<dbReference type="RefSeq" id="WP_004090503.1">
    <property type="nucleotide sequence ID" value="NC_010577.1"/>
</dbReference>
<dbReference type="SMR" id="B2I9B2"/>
<dbReference type="GeneID" id="93905724"/>
<dbReference type="KEGG" id="xfn:XfasM23_1968"/>
<dbReference type="HOGENOM" id="CLU_028104_2_2_6"/>
<dbReference type="UniPathway" id="UPA00219"/>
<dbReference type="Proteomes" id="UP000001698">
    <property type="component" value="Chromosome"/>
</dbReference>
<dbReference type="GO" id="GO:0005737">
    <property type="term" value="C:cytoplasm"/>
    <property type="evidence" value="ECO:0007669"/>
    <property type="project" value="UniProtKB-SubCell"/>
</dbReference>
<dbReference type="GO" id="GO:0005524">
    <property type="term" value="F:ATP binding"/>
    <property type="evidence" value="ECO:0007669"/>
    <property type="project" value="UniProtKB-UniRule"/>
</dbReference>
<dbReference type="GO" id="GO:0008763">
    <property type="term" value="F:UDP-N-acetylmuramate-L-alanine ligase activity"/>
    <property type="evidence" value="ECO:0007669"/>
    <property type="project" value="UniProtKB-UniRule"/>
</dbReference>
<dbReference type="GO" id="GO:0051301">
    <property type="term" value="P:cell division"/>
    <property type="evidence" value="ECO:0007669"/>
    <property type="project" value="UniProtKB-KW"/>
</dbReference>
<dbReference type="GO" id="GO:0071555">
    <property type="term" value="P:cell wall organization"/>
    <property type="evidence" value="ECO:0007669"/>
    <property type="project" value="UniProtKB-KW"/>
</dbReference>
<dbReference type="GO" id="GO:0009252">
    <property type="term" value="P:peptidoglycan biosynthetic process"/>
    <property type="evidence" value="ECO:0007669"/>
    <property type="project" value="UniProtKB-UniRule"/>
</dbReference>
<dbReference type="GO" id="GO:0008360">
    <property type="term" value="P:regulation of cell shape"/>
    <property type="evidence" value="ECO:0007669"/>
    <property type="project" value="UniProtKB-KW"/>
</dbReference>
<dbReference type="Gene3D" id="3.90.190.20">
    <property type="entry name" value="Mur ligase, C-terminal domain"/>
    <property type="match status" value="1"/>
</dbReference>
<dbReference type="Gene3D" id="3.40.1190.10">
    <property type="entry name" value="Mur-like, catalytic domain"/>
    <property type="match status" value="1"/>
</dbReference>
<dbReference type="Gene3D" id="3.40.50.720">
    <property type="entry name" value="NAD(P)-binding Rossmann-like Domain"/>
    <property type="match status" value="1"/>
</dbReference>
<dbReference type="HAMAP" id="MF_00046">
    <property type="entry name" value="MurC"/>
    <property type="match status" value="1"/>
</dbReference>
<dbReference type="InterPro" id="IPR036565">
    <property type="entry name" value="Mur-like_cat_sf"/>
</dbReference>
<dbReference type="InterPro" id="IPR004101">
    <property type="entry name" value="Mur_ligase_C"/>
</dbReference>
<dbReference type="InterPro" id="IPR036615">
    <property type="entry name" value="Mur_ligase_C_dom_sf"/>
</dbReference>
<dbReference type="InterPro" id="IPR013221">
    <property type="entry name" value="Mur_ligase_cen"/>
</dbReference>
<dbReference type="InterPro" id="IPR000713">
    <property type="entry name" value="Mur_ligase_N"/>
</dbReference>
<dbReference type="InterPro" id="IPR050061">
    <property type="entry name" value="MurCDEF_pg_biosynth"/>
</dbReference>
<dbReference type="InterPro" id="IPR005758">
    <property type="entry name" value="UDP-N-AcMur_Ala_ligase_MurC"/>
</dbReference>
<dbReference type="NCBIfam" id="TIGR01082">
    <property type="entry name" value="murC"/>
    <property type="match status" value="1"/>
</dbReference>
<dbReference type="PANTHER" id="PTHR43445:SF3">
    <property type="entry name" value="UDP-N-ACETYLMURAMATE--L-ALANINE LIGASE"/>
    <property type="match status" value="1"/>
</dbReference>
<dbReference type="PANTHER" id="PTHR43445">
    <property type="entry name" value="UDP-N-ACETYLMURAMATE--L-ALANINE LIGASE-RELATED"/>
    <property type="match status" value="1"/>
</dbReference>
<dbReference type="Pfam" id="PF01225">
    <property type="entry name" value="Mur_ligase"/>
    <property type="match status" value="1"/>
</dbReference>
<dbReference type="Pfam" id="PF02875">
    <property type="entry name" value="Mur_ligase_C"/>
    <property type="match status" value="1"/>
</dbReference>
<dbReference type="Pfam" id="PF08245">
    <property type="entry name" value="Mur_ligase_M"/>
    <property type="match status" value="1"/>
</dbReference>
<dbReference type="SUPFAM" id="SSF51984">
    <property type="entry name" value="MurCD N-terminal domain"/>
    <property type="match status" value="1"/>
</dbReference>
<dbReference type="SUPFAM" id="SSF53623">
    <property type="entry name" value="MurD-like peptide ligases, catalytic domain"/>
    <property type="match status" value="1"/>
</dbReference>
<dbReference type="SUPFAM" id="SSF53244">
    <property type="entry name" value="MurD-like peptide ligases, peptide-binding domain"/>
    <property type="match status" value="1"/>
</dbReference>
<organism>
    <name type="scientific">Xylella fastidiosa (strain M23)</name>
    <dbReference type="NCBI Taxonomy" id="405441"/>
    <lineage>
        <taxon>Bacteria</taxon>
        <taxon>Pseudomonadati</taxon>
        <taxon>Pseudomonadota</taxon>
        <taxon>Gammaproteobacteria</taxon>
        <taxon>Lysobacterales</taxon>
        <taxon>Lysobacteraceae</taxon>
        <taxon>Xylella</taxon>
    </lineage>
</organism>
<feature type="chain" id="PRO_1000091152" description="UDP-N-acetylmuramate--L-alanine ligase">
    <location>
        <begin position="1"/>
        <end position="477"/>
    </location>
</feature>
<feature type="binding site" evidence="1">
    <location>
        <begin position="122"/>
        <end position="128"/>
    </location>
    <ligand>
        <name>ATP</name>
        <dbReference type="ChEBI" id="CHEBI:30616"/>
    </ligand>
</feature>
<protein>
    <recommendedName>
        <fullName evidence="1">UDP-N-acetylmuramate--L-alanine ligase</fullName>
        <ecNumber evidence="1">6.3.2.8</ecNumber>
    </recommendedName>
    <alternativeName>
        <fullName evidence="1">UDP-N-acetylmuramoyl-L-alanine synthetase</fullName>
    </alternativeName>
</protein>